<feature type="chain" id="PRO_0000334720" description="Adenine phosphoribosyltransferase">
    <location>
        <begin position="1"/>
        <end position="173"/>
    </location>
</feature>
<gene>
    <name evidence="1" type="primary">apt</name>
    <name type="ordered locus">UPA3_0506</name>
</gene>
<name>APT_UREP2</name>
<keyword id="KW-0963">Cytoplasm</keyword>
<keyword id="KW-0328">Glycosyltransferase</keyword>
<keyword id="KW-0660">Purine salvage</keyword>
<keyword id="KW-0808">Transferase</keyword>
<protein>
    <recommendedName>
        <fullName evidence="1">Adenine phosphoribosyltransferase</fullName>
        <shortName evidence="1">APRT</shortName>
        <ecNumber evidence="1">2.4.2.7</ecNumber>
    </recommendedName>
</protein>
<organism>
    <name type="scientific">Ureaplasma parvum serovar 3 (strain ATCC 27815 / 27 / NCTC 11736)</name>
    <dbReference type="NCBI Taxonomy" id="505682"/>
    <lineage>
        <taxon>Bacteria</taxon>
        <taxon>Bacillati</taxon>
        <taxon>Mycoplasmatota</taxon>
        <taxon>Mycoplasmoidales</taxon>
        <taxon>Mycoplasmoidaceae</taxon>
        <taxon>Ureaplasma</taxon>
    </lineage>
</organism>
<dbReference type="EC" id="2.4.2.7" evidence="1"/>
<dbReference type="EMBL" id="CP000942">
    <property type="protein sequence ID" value="ACA33026.1"/>
    <property type="molecule type" value="Genomic_DNA"/>
</dbReference>
<dbReference type="RefSeq" id="WP_006688428.1">
    <property type="nucleotide sequence ID" value="NC_010503.1"/>
</dbReference>
<dbReference type="SMR" id="B1AJC8"/>
<dbReference type="GeneID" id="29672626"/>
<dbReference type="KEGG" id="upa:UPA3_0506"/>
<dbReference type="HOGENOM" id="CLU_063339_3_0_14"/>
<dbReference type="UniPathway" id="UPA00588">
    <property type="reaction ID" value="UER00646"/>
</dbReference>
<dbReference type="Proteomes" id="UP000002162">
    <property type="component" value="Chromosome"/>
</dbReference>
<dbReference type="GO" id="GO:0005737">
    <property type="term" value="C:cytoplasm"/>
    <property type="evidence" value="ECO:0007669"/>
    <property type="project" value="UniProtKB-SubCell"/>
</dbReference>
<dbReference type="GO" id="GO:0002055">
    <property type="term" value="F:adenine binding"/>
    <property type="evidence" value="ECO:0007669"/>
    <property type="project" value="TreeGrafter"/>
</dbReference>
<dbReference type="GO" id="GO:0003999">
    <property type="term" value="F:adenine phosphoribosyltransferase activity"/>
    <property type="evidence" value="ECO:0007669"/>
    <property type="project" value="UniProtKB-UniRule"/>
</dbReference>
<dbReference type="GO" id="GO:0016208">
    <property type="term" value="F:AMP binding"/>
    <property type="evidence" value="ECO:0007669"/>
    <property type="project" value="TreeGrafter"/>
</dbReference>
<dbReference type="GO" id="GO:0006168">
    <property type="term" value="P:adenine salvage"/>
    <property type="evidence" value="ECO:0007669"/>
    <property type="project" value="InterPro"/>
</dbReference>
<dbReference type="GO" id="GO:0044209">
    <property type="term" value="P:AMP salvage"/>
    <property type="evidence" value="ECO:0007669"/>
    <property type="project" value="UniProtKB-UniRule"/>
</dbReference>
<dbReference type="GO" id="GO:0006166">
    <property type="term" value="P:purine ribonucleoside salvage"/>
    <property type="evidence" value="ECO:0007669"/>
    <property type="project" value="UniProtKB-KW"/>
</dbReference>
<dbReference type="CDD" id="cd06223">
    <property type="entry name" value="PRTases_typeI"/>
    <property type="match status" value="1"/>
</dbReference>
<dbReference type="FunFam" id="3.40.50.2020:FF:000021">
    <property type="entry name" value="Adenine phosphoribosyltransferase"/>
    <property type="match status" value="1"/>
</dbReference>
<dbReference type="Gene3D" id="3.40.50.2020">
    <property type="match status" value="1"/>
</dbReference>
<dbReference type="HAMAP" id="MF_00004">
    <property type="entry name" value="Aden_phosphoribosyltr"/>
    <property type="match status" value="1"/>
</dbReference>
<dbReference type="InterPro" id="IPR005764">
    <property type="entry name" value="Ade_phspho_trans"/>
</dbReference>
<dbReference type="InterPro" id="IPR000836">
    <property type="entry name" value="PRibTrfase_dom"/>
</dbReference>
<dbReference type="InterPro" id="IPR029057">
    <property type="entry name" value="PRTase-like"/>
</dbReference>
<dbReference type="InterPro" id="IPR050054">
    <property type="entry name" value="UPRTase/APRTase"/>
</dbReference>
<dbReference type="NCBIfam" id="TIGR01090">
    <property type="entry name" value="apt"/>
    <property type="match status" value="1"/>
</dbReference>
<dbReference type="NCBIfam" id="NF002634">
    <property type="entry name" value="PRK02304.1-3"/>
    <property type="match status" value="1"/>
</dbReference>
<dbReference type="NCBIfam" id="NF002636">
    <property type="entry name" value="PRK02304.1-5"/>
    <property type="match status" value="1"/>
</dbReference>
<dbReference type="PANTHER" id="PTHR32315">
    <property type="entry name" value="ADENINE PHOSPHORIBOSYLTRANSFERASE"/>
    <property type="match status" value="1"/>
</dbReference>
<dbReference type="PANTHER" id="PTHR32315:SF3">
    <property type="entry name" value="ADENINE PHOSPHORIBOSYLTRANSFERASE"/>
    <property type="match status" value="1"/>
</dbReference>
<dbReference type="Pfam" id="PF00156">
    <property type="entry name" value="Pribosyltran"/>
    <property type="match status" value="1"/>
</dbReference>
<dbReference type="SUPFAM" id="SSF53271">
    <property type="entry name" value="PRTase-like"/>
    <property type="match status" value="1"/>
</dbReference>
<dbReference type="PROSITE" id="PS00103">
    <property type="entry name" value="PUR_PYR_PR_TRANSFER"/>
    <property type="match status" value="1"/>
</dbReference>
<sequence length="173" mass="19245">MINIDYIKSKIRDVPDFPKKGIVFKDITPLFLEPKIIEKIVDDFADFAKSLNIDAIIGAESRGFLFAAPLSIKLNKPFILVRKPNKLPNDVYSAEYTLEYGSSRVEMHKDALKPNQRVLIVDDLLATGGTVAAIENLVRQAKGIVAGSVYLIRLGFLKGEEKLSGKVHALINY</sequence>
<proteinExistence type="inferred from homology"/>
<comment type="function">
    <text evidence="1">Catalyzes a salvage reaction resulting in the formation of AMP, that is energically less costly than de novo synthesis.</text>
</comment>
<comment type="catalytic activity">
    <reaction evidence="1">
        <text>AMP + diphosphate = 5-phospho-alpha-D-ribose 1-diphosphate + adenine</text>
        <dbReference type="Rhea" id="RHEA:16609"/>
        <dbReference type="ChEBI" id="CHEBI:16708"/>
        <dbReference type="ChEBI" id="CHEBI:33019"/>
        <dbReference type="ChEBI" id="CHEBI:58017"/>
        <dbReference type="ChEBI" id="CHEBI:456215"/>
        <dbReference type="EC" id="2.4.2.7"/>
    </reaction>
</comment>
<comment type="pathway">
    <text evidence="1">Purine metabolism; AMP biosynthesis via salvage pathway; AMP from adenine: step 1/1.</text>
</comment>
<comment type="subunit">
    <text evidence="1">Homodimer.</text>
</comment>
<comment type="subcellular location">
    <subcellularLocation>
        <location evidence="1">Cytoplasm</location>
    </subcellularLocation>
</comment>
<comment type="similarity">
    <text evidence="1">Belongs to the purine/pyrimidine phosphoribosyltransferase family.</text>
</comment>
<reference key="1">
    <citation type="submission" date="2008-02" db="EMBL/GenBank/DDBJ databases">
        <title>Genome sequence of Ureaplasma parvum serovar 3.</title>
        <authorList>
            <person name="Methe B.A."/>
            <person name="Glass J."/>
            <person name="Waites K."/>
            <person name="Shrivastava S."/>
        </authorList>
    </citation>
    <scope>NUCLEOTIDE SEQUENCE [LARGE SCALE GENOMIC DNA]</scope>
    <source>
        <strain>ATCC 27815 / 27 / NCTC 11736</strain>
    </source>
</reference>
<evidence type="ECO:0000255" key="1">
    <source>
        <dbReference type="HAMAP-Rule" id="MF_00004"/>
    </source>
</evidence>
<accession>B1AJC8</accession>